<protein>
    <recommendedName>
        <fullName evidence="1">Glucokinase</fullName>
        <ecNumber evidence="1">2.7.1.2</ecNumber>
    </recommendedName>
    <alternativeName>
        <fullName evidence="1">Glucose kinase</fullName>
    </alternativeName>
</protein>
<keyword id="KW-0067">ATP-binding</keyword>
<keyword id="KW-0963">Cytoplasm</keyword>
<keyword id="KW-0324">Glycolysis</keyword>
<keyword id="KW-0418">Kinase</keyword>
<keyword id="KW-0547">Nucleotide-binding</keyword>
<keyword id="KW-1185">Reference proteome</keyword>
<keyword id="KW-0808">Transferase</keyword>
<comment type="function">
    <text>Not highly important in E.coli as glucose is transported into the cell by the PTS system already as glucose 6-phosphate.</text>
</comment>
<comment type="catalytic activity">
    <reaction evidence="1">
        <text>D-glucose + ATP = D-glucose 6-phosphate + ADP + H(+)</text>
        <dbReference type="Rhea" id="RHEA:17825"/>
        <dbReference type="ChEBI" id="CHEBI:4167"/>
        <dbReference type="ChEBI" id="CHEBI:15378"/>
        <dbReference type="ChEBI" id="CHEBI:30616"/>
        <dbReference type="ChEBI" id="CHEBI:61548"/>
        <dbReference type="ChEBI" id="CHEBI:456216"/>
        <dbReference type="EC" id="2.7.1.2"/>
    </reaction>
</comment>
<comment type="subcellular location">
    <subcellularLocation>
        <location evidence="1">Cytoplasm</location>
    </subcellularLocation>
</comment>
<comment type="similarity">
    <text evidence="1">Belongs to the bacterial glucokinase family.</text>
</comment>
<organism>
    <name type="scientific">Escherichia coli O1:K1 / APEC</name>
    <dbReference type="NCBI Taxonomy" id="405955"/>
    <lineage>
        <taxon>Bacteria</taxon>
        <taxon>Pseudomonadati</taxon>
        <taxon>Pseudomonadota</taxon>
        <taxon>Gammaproteobacteria</taxon>
        <taxon>Enterobacterales</taxon>
        <taxon>Enterobacteriaceae</taxon>
        <taxon>Escherichia</taxon>
    </lineage>
</organism>
<accession>A1ADR4</accession>
<dbReference type="EC" id="2.7.1.2" evidence="1"/>
<dbReference type="EMBL" id="CP000468">
    <property type="protein sequence ID" value="ABJ01804.1"/>
    <property type="molecule type" value="Genomic_DNA"/>
</dbReference>
<dbReference type="RefSeq" id="WP_000170355.1">
    <property type="nucleotide sequence ID" value="NZ_CADILS010000022.1"/>
</dbReference>
<dbReference type="SMR" id="A1ADR4"/>
<dbReference type="KEGG" id="ecv:APECO1_4149"/>
<dbReference type="HOGENOM" id="CLU_042582_1_0_6"/>
<dbReference type="Proteomes" id="UP000008216">
    <property type="component" value="Chromosome"/>
</dbReference>
<dbReference type="GO" id="GO:0005829">
    <property type="term" value="C:cytosol"/>
    <property type="evidence" value="ECO:0007669"/>
    <property type="project" value="TreeGrafter"/>
</dbReference>
<dbReference type="GO" id="GO:0005524">
    <property type="term" value="F:ATP binding"/>
    <property type="evidence" value="ECO:0007669"/>
    <property type="project" value="UniProtKB-UniRule"/>
</dbReference>
<dbReference type="GO" id="GO:0005536">
    <property type="term" value="F:D-glucose binding"/>
    <property type="evidence" value="ECO:0007669"/>
    <property type="project" value="InterPro"/>
</dbReference>
<dbReference type="GO" id="GO:0004340">
    <property type="term" value="F:glucokinase activity"/>
    <property type="evidence" value="ECO:0007669"/>
    <property type="project" value="UniProtKB-UniRule"/>
</dbReference>
<dbReference type="GO" id="GO:0006096">
    <property type="term" value="P:glycolytic process"/>
    <property type="evidence" value="ECO:0007669"/>
    <property type="project" value="UniProtKB-UniRule"/>
</dbReference>
<dbReference type="CDD" id="cd24008">
    <property type="entry name" value="ASKHA_NBD_GLK"/>
    <property type="match status" value="1"/>
</dbReference>
<dbReference type="FunFam" id="3.30.420.40:FF:000045">
    <property type="entry name" value="Glucokinase"/>
    <property type="match status" value="1"/>
</dbReference>
<dbReference type="FunFam" id="3.40.367.20:FF:000002">
    <property type="entry name" value="Glucokinase"/>
    <property type="match status" value="1"/>
</dbReference>
<dbReference type="Gene3D" id="3.30.420.40">
    <property type="match status" value="1"/>
</dbReference>
<dbReference type="Gene3D" id="3.40.367.20">
    <property type="match status" value="1"/>
</dbReference>
<dbReference type="HAMAP" id="MF_00524">
    <property type="entry name" value="Glucokinase"/>
    <property type="match status" value="1"/>
</dbReference>
<dbReference type="InterPro" id="IPR043129">
    <property type="entry name" value="ATPase_NBD"/>
</dbReference>
<dbReference type="InterPro" id="IPR050201">
    <property type="entry name" value="Bacterial_glucokinase"/>
</dbReference>
<dbReference type="InterPro" id="IPR003836">
    <property type="entry name" value="Glucokinase"/>
</dbReference>
<dbReference type="NCBIfam" id="TIGR00749">
    <property type="entry name" value="glk"/>
    <property type="match status" value="1"/>
</dbReference>
<dbReference type="NCBIfam" id="NF001414">
    <property type="entry name" value="PRK00292.1-1"/>
    <property type="match status" value="1"/>
</dbReference>
<dbReference type="NCBIfam" id="NF001416">
    <property type="entry name" value="PRK00292.1-3"/>
    <property type="match status" value="1"/>
</dbReference>
<dbReference type="PANTHER" id="PTHR47690">
    <property type="entry name" value="GLUCOKINASE"/>
    <property type="match status" value="1"/>
</dbReference>
<dbReference type="PANTHER" id="PTHR47690:SF1">
    <property type="entry name" value="GLUCOKINASE"/>
    <property type="match status" value="1"/>
</dbReference>
<dbReference type="Pfam" id="PF02685">
    <property type="entry name" value="Glucokinase"/>
    <property type="match status" value="1"/>
</dbReference>
<dbReference type="SUPFAM" id="SSF53067">
    <property type="entry name" value="Actin-like ATPase domain"/>
    <property type="match status" value="1"/>
</dbReference>
<reference key="1">
    <citation type="journal article" date="2007" name="J. Bacteriol.">
        <title>The genome sequence of avian pathogenic Escherichia coli strain O1:K1:H7 shares strong similarities with human extraintestinal pathogenic E. coli genomes.</title>
        <authorList>
            <person name="Johnson T.J."/>
            <person name="Kariyawasam S."/>
            <person name="Wannemuehler Y."/>
            <person name="Mangiamele P."/>
            <person name="Johnson S.J."/>
            <person name="Doetkott C."/>
            <person name="Skyberg J.A."/>
            <person name="Lynne A.M."/>
            <person name="Johnson J.R."/>
            <person name="Nolan L.K."/>
        </authorList>
    </citation>
    <scope>NUCLEOTIDE SEQUENCE [LARGE SCALE GENOMIC DNA]</scope>
</reference>
<proteinExistence type="inferred from homology"/>
<feature type="chain" id="PRO_1000050967" description="Glucokinase">
    <location>
        <begin position="1"/>
        <end position="321"/>
    </location>
</feature>
<feature type="binding site" evidence="1">
    <location>
        <begin position="8"/>
        <end position="13"/>
    </location>
    <ligand>
        <name>ATP</name>
        <dbReference type="ChEBI" id="CHEBI:30616"/>
    </ligand>
</feature>
<name>GLK_ECOK1</name>
<sequence>MTKYALVGDVGGTNARLALCDIASGEISQAKTYSGLDYPSLEAVIRVYLEEHKVEVKDGCIAIACPITGDWVAMTNHTWAFSIAEMKKNLGFSHLEIINDFTAVSMAIPMLKKEHLIQFGGAEPVEGKPIAVYGAGTGLGVAHLVHVDKRWVSLPGEGGHVDFAPNSEEEGIILEILRAEIGHVSAERVLSGPGLVNLYRAIVKADNRLPENLKPKDITERALADSCTDCRRALSLFCVIMGRFGGNLALNLGTFGGVFIAGGIVPRFLEFFKASGFRAAFEDKGRFKEYVHDIPVYLIVHDNPGLLGSGAHLRQTLGHIL</sequence>
<gene>
    <name evidence="1" type="primary">glk</name>
    <name type="ordered locus">Ecok1_23100</name>
    <name type="ORF">APECO1_4149</name>
</gene>
<evidence type="ECO:0000255" key="1">
    <source>
        <dbReference type="HAMAP-Rule" id="MF_00524"/>
    </source>
</evidence>